<accession>Q7M6Y3</accession>
<accession>Q3TS04</accession>
<accession>Q811P1</accession>
<accession>Q8BUF6</accession>
<accession>Q8CIH8</accession>
<accession>Q8R0A9</accession>
<accession>Q8R3E1</accession>
<accession>Q8VDN5</accession>
<accession>Q921L0</accession>
<name>PICAL_MOUSE</name>
<sequence length="660" mass="71543">MSGQSLTDRITAAQHSVTGSAVSKTVCKATTHEIMGPKKKHLDYLIQCTNEMNVNIPQLADSLFERTTNSSWVVVFKSLITTHHLMVYGNERFIQYLASRNTLFNLSNFLDKSGLQGYDMSTFIRRYSRYLNEKAVSYRQVAFDFTKVKRGADGVMRTMNTEKLLKTVPIIQNQMDALLDFNVNSNELTNGVINAAFMLLFKDAIRLFAAYNEGIINLLEKYFDMKKNQCKEGLDIYKKFLTRMTRISEFLKVAEQVGIDRGDIPDLSQAPSSLLDALEQHLASLEGKKIKDSTAASRATTLSNAVSSLASTGLSLTKVDEREKQAALEEEQARLKALKEQRLKELAKKPHTSLTTAASPVSTSAGGIMTAPAIDIFSTPSSSNSTSKLPNDLLDLQQPTFHPSVHAMSAAPQGASTWGDPFSATLDAVEDAIPSLNPFLTKSSGDVHLPIASDVSTFTTRTPTHEMFVGFSPSPVAQPHSSAGLNVDFESVFGNKSTNVAVDSGGFDELGGLLKPTVASQNQSLPVAKLPPNKLVSDDLDSSLANLVGNLGIGNGTTKNDVSWSQPGEKKLTGGSNWQPKVAPTTAWSAATMNGMHFPQYAPPVMAYPATTPTGMIGYGIPPQMGSVPVMTQPTLIYSQPVMRPPNPFGPVSGAQIQFM</sequence>
<proteinExistence type="evidence at protein level"/>
<keyword id="KW-0007">Acetylation</keyword>
<keyword id="KW-0025">Alternative splicing</keyword>
<keyword id="KW-1003">Cell membrane</keyword>
<keyword id="KW-0168">Coated pit</keyword>
<keyword id="KW-0968">Cytoplasmic vesicle</keyword>
<keyword id="KW-0217">Developmental protein</keyword>
<keyword id="KW-0254">Endocytosis</keyword>
<keyword id="KW-0333">Golgi apparatus</keyword>
<keyword id="KW-1017">Isopeptide bond</keyword>
<keyword id="KW-0472">Membrane</keyword>
<keyword id="KW-0539">Nucleus</keyword>
<keyword id="KW-0597">Phosphoprotein</keyword>
<keyword id="KW-1185">Reference proteome</keyword>
<keyword id="KW-0832">Ubl conjugation</keyword>
<organism evidence="11">
    <name type="scientific">Mus musculus</name>
    <name type="common">Mouse</name>
    <dbReference type="NCBI Taxonomy" id="10090"/>
    <lineage>
        <taxon>Eukaryota</taxon>
        <taxon>Metazoa</taxon>
        <taxon>Chordata</taxon>
        <taxon>Craniata</taxon>
        <taxon>Vertebrata</taxon>
        <taxon>Euteleostomi</taxon>
        <taxon>Mammalia</taxon>
        <taxon>Eutheria</taxon>
        <taxon>Euarchontoglires</taxon>
        <taxon>Glires</taxon>
        <taxon>Rodentia</taxon>
        <taxon>Myomorpha</taxon>
        <taxon>Muroidea</taxon>
        <taxon>Muridae</taxon>
        <taxon>Murinae</taxon>
        <taxon>Mus</taxon>
        <taxon>Mus</taxon>
    </lineage>
</organism>
<evidence type="ECO:0000250" key="1"/>
<evidence type="ECO:0000250" key="2">
    <source>
        <dbReference type="UniProtKB" id="Q13492"/>
    </source>
</evidence>
<evidence type="ECO:0000255" key="3">
    <source>
        <dbReference type="PROSITE-ProRule" id="PRU00243"/>
    </source>
</evidence>
<evidence type="ECO:0000256" key="4">
    <source>
        <dbReference type="SAM" id="MobiDB-lite"/>
    </source>
</evidence>
<evidence type="ECO:0000269" key="5">
    <source>
    </source>
</evidence>
<evidence type="ECO:0000269" key="6">
    <source>
    </source>
</evidence>
<evidence type="ECO:0000303" key="7">
    <source>
    </source>
</evidence>
<evidence type="ECO:0000303" key="8">
    <source>
    </source>
</evidence>
<evidence type="ECO:0000305" key="9"/>
<evidence type="ECO:0000312" key="10">
    <source>
        <dbReference type="EMBL" id="AAH57683.1"/>
    </source>
</evidence>
<evidence type="ECO:0000312" key="11">
    <source>
        <dbReference type="EMBL" id="AAO17153.1"/>
    </source>
</evidence>
<protein>
    <recommendedName>
        <fullName>Phosphatidylinositol-binding clathrin assembly protein</fullName>
    </recommendedName>
    <alternativeName>
        <fullName>Clathrin assembly lymphoid myeloid leukemia</fullName>
        <shortName>CALM</shortName>
    </alternativeName>
</protein>
<dbReference type="EMBL" id="AY206701">
    <property type="protein sequence ID" value="AAO17153.1"/>
    <property type="molecule type" value="mRNA"/>
</dbReference>
<dbReference type="EMBL" id="BK001028">
    <property type="protein sequence ID" value="DAA01470.1"/>
    <property type="molecule type" value="mRNA"/>
</dbReference>
<dbReference type="EMBL" id="BC011470">
    <property type="protein sequence ID" value="AAH11470.1"/>
    <property type="molecule type" value="mRNA"/>
</dbReference>
<dbReference type="EMBL" id="BC021491">
    <property type="protein sequence ID" value="AAH21491.1"/>
    <property type="molecule type" value="mRNA"/>
</dbReference>
<dbReference type="EMBL" id="BC023843">
    <property type="protein sequence ID" value="AAH23843.1"/>
    <property type="molecule type" value="mRNA"/>
</dbReference>
<dbReference type="EMBL" id="BC025566">
    <property type="protein sequence ID" value="AAH25566.1"/>
    <property type="molecule type" value="mRNA"/>
</dbReference>
<dbReference type="EMBL" id="BC027116">
    <property type="protein sequence ID" value="AAH27116.1"/>
    <property type="molecule type" value="mRNA"/>
</dbReference>
<dbReference type="EMBL" id="BC057683">
    <property type="protein sequence ID" value="AAH57683.1"/>
    <property type="molecule type" value="mRNA"/>
</dbReference>
<dbReference type="EMBL" id="AK085472">
    <property type="protein sequence ID" value="BAC39454.2"/>
    <property type="status" value="ALT_INIT"/>
    <property type="molecule type" value="mRNA"/>
</dbReference>
<dbReference type="EMBL" id="AK162360">
    <property type="protein sequence ID" value="BAE36872.1"/>
    <property type="molecule type" value="mRNA"/>
</dbReference>
<dbReference type="CCDS" id="CCDS52307.1">
    <molecule id="Q7M6Y3-1"/>
</dbReference>
<dbReference type="CCDS" id="CCDS85334.1">
    <molecule id="Q7M6Y3-6"/>
</dbReference>
<dbReference type="CCDS" id="CCDS85335.1">
    <molecule id="Q7M6Y3-5"/>
</dbReference>
<dbReference type="CCDS" id="CCDS85336.1">
    <molecule id="Q7M6Y3-4"/>
</dbReference>
<dbReference type="CCDS" id="CCDS85337.1">
    <molecule id="Q7M6Y3-3"/>
</dbReference>
<dbReference type="CCDS" id="CCDS85338.1">
    <molecule id="Q7M6Y3-2"/>
</dbReference>
<dbReference type="RefSeq" id="NP_001239449.1">
    <molecule id="Q7M6Y3-5"/>
    <property type="nucleotide sequence ID" value="NM_001252520.3"/>
</dbReference>
<dbReference type="RefSeq" id="NP_001239450.1">
    <molecule id="Q7M6Y3-6"/>
    <property type="nucleotide sequence ID" value="NM_001252521.3"/>
</dbReference>
<dbReference type="RefSeq" id="NP_001239451.1">
    <molecule id="Q7M6Y3-4"/>
    <property type="nucleotide sequence ID" value="NM_001252522.3"/>
</dbReference>
<dbReference type="RefSeq" id="NP_001239452.1">
    <molecule id="Q7M6Y3-3"/>
    <property type="nucleotide sequence ID" value="NM_001252523.3"/>
</dbReference>
<dbReference type="RefSeq" id="NP_001239453.1">
    <molecule id="Q7M6Y3-2"/>
    <property type="nucleotide sequence ID" value="NM_001252524.3"/>
</dbReference>
<dbReference type="RefSeq" id="NP_666306.2">
    <molecule id="Q7M6Y3-1"/>
    <property type="nucleotide sequence ID" value="NM_146194.4"/>
</dbReference>
<dbReference type="SMR" id="Q7M6Y3"/>
<dbReference type="BioGRID" id="231417">
    <property type="interactions" value="12"/>
</dbReference>
<dbReference type="ELM" id="Q7M6Y3"/>
<dbReference type="FunCoup" id="Q7M6Y3">
    <property type="interactions" value="3446"/>
</dbReference>
<dbReference type="IntAct" id="Q7M6Y3">
    <property type="interactions" value="2"/>
</dbReference>
<dbReference type="STRING" id="10090.ENSMUSP00000146501"/>
<dbReference type="GlyGen" id="Q7M6Y3">
    <property type="glycosylation" value="15 sites, 1 O-linked glycan (14 sites)"/>
</dbReference>
<dbReference type="iPTMnet" id="Q7M6Y3"/>
<dbReference type="MetOSite" id="Q7M6Y3"/>
<dbReference type="PhosphoSitePlus" id="Q7M6Y3"/>
<dbReference type="SwissPalm" id="Q7M6Y3"/>
<dbReference type="jPOST" id="Q7M6Y3"/>
<dbReference type="PaxDb" id="10090-ENSMUSP00000051092"/>
<dbReference type="PeptideAtlas" id="Q7M6Y3"/>
<dbReference type="ProteomicsDB" id="288151">
    <molecule id="Q7M6Y3-1"/>
</dbReference>
<dbReference type="ProteomicsDB" id="288152">
    <molecule id="Q7M6Y3-2"/>
</dbReference>
<dbReference type="ProteomicsDB" id="288153">
    <molecule id="Q7M6Y3-3"/>
</dbReference>
<dbReference type="ProteomicsDB" id="288154">
    <molecule id="Q7M6Y3-4"/>
</dbReference>
<dbReference type="ProteomicsDB" id="288155">
    <molecule id="Q7M6Y3-5"/>
</dbReference>
<dbReference type="ProteomicsDB" id="288156">
    <molecule id="Q7M6Y3-6"/>
</dbReference>
<dbReference type="Pumba" id="Q7M6Y3"/>
<dbReference type="Antibodypedia" id="17636">
    <property type="antibodies" value="207 antibodies from 34 providers"/>
</dbReference>
<dbReference type="DNASU" id="233489"/>
<dbReference type="Ensembl" id="ENSMUST00000049537.9">
    <molecule id="Q7M6Y3-5"/>
    <property type="protein sequence ID" value="ENSMUSP00000051092.9"/>
    <property type="gene ID" value="ENSMUSG00000039361.12"/>
</dbReference>
<dbReference type="Ensembl" id="ENSMUST00000207225.2">
    <molecule id="Q7M6Y3-2"/>
    <property type="protein sequence ID" value="ENSMUSP00000146659.2"/>
    <property type="gene ID" value="ENSMUSG00000039361.12"/>
</dbReference>
<dbReference type="Ensembl" id="ENSMUST00000207484.2">
    <molecule id="Q7M6Y3-1"/>
    <property type="protein sequence ID" value="ENSMUSP00000146501.2"/>
    <property type="gene ID" value="ENSMUSG00000039361.12"/>
</dbReference>
<dbReference type="Ensembl" id="ENSMUST00000208730.2">
    <molecule id="Q7M6Y3-3"/>
    <property type="protein sequence ID" value="ENSMUSP00000146541.2"/>
    <property type="gene ID" value="ENSMUSG00000039361.12"/>
</dbReference>
<dbReference type="Ensembl" id="ENSMUST00000208742.2">
    <molecule id="Q7M6Y3-6"/>
    <property type="protein sequence ID" value="ENSMUSP00000147016.2"/>
    <property type="gene ID" value="ENSMUSG00000039361.12"/>
</dbReference>
<dbReference type="Ensembl" id="ENSMUST00000209068.2">
    <molecule id="Q7M6Y3-4"/>
    <property type="protein sequence ID" value="ENSMUSP00000146386.2"/>
    <property type="gene ID" value="ENSMUSG00000039361.12"/>
</dbReference>
<dbReference type="GeneID" id="233489"/>
<dbReference type="KEGG" id="mmu:233489"/>
<dbReference type="UCSC" id="uc009igq.2">
    <molecule id="Q7M6Y3-1"/>
    <property type="organism name" value="mouse"/>
</dbReference>
<dbReference type="UCSC" id="uc009igr.2">
    <molecule id="Q7M6Y3-5"/>
    <property type="organism name" value="mouse"/>
</dbReference>
<dbReference type="UCSC" id="uc009igs.2">
    <molecule id="Q7M6Y3-6"/>
    <property type="organism name" value="mouse"/>
</dbReference>
<dbReference type="UCSC" id="uc009igt.2">
    <molecule id="Q7M6Y3-4"/>
    <property type="organism name" value="mouse"/>
</dbReference>
<dbReference type="UCSC" id="uc009igu.2">
    <molecule id="Q7M6Y3-3"/>
    <property type="organism name" value="mouse"/>
</dbReference>
<dbReference type="AGR" id="MGI:2385902"/>
<dbReference type="CTD" id="8301"/>
<dbReference type="MGI" id="MGI:2385902">
    <property type="gene designation" value="Picalm"/>
</dbReference>
<dbReference type="VEuPathDB" id="HostDB:ENSMUSG00000039361"/>
<dbReference type="eggNOG" id="KOG0251">
    <property type="taxonomic scope" value="Eukaryota"/>
</dbReference>
<dbReference type="GeneTree" id="ENSGT00950000183068"/>
<dbReference type="HOGENOM" id="CLU_014080_0_0_1"/>
<dbReference type="InParanoid" id="Q7M6Y3"/>
<dbReference type="OMA" id="XVNSNEL"/>
<dbReference type="OrthoDB" id="44015at2759"/>
<dbReference type="PhylomeDB" id="Q7M6Y3"/>
<dbReference type="TreeFam" id="TF314861"/>
<dbReference type="Reactome" id="R-MMU-432722">
    <property type="pathway name" value="Golgi Associated Vesicle Biogenesis"/>
</dbReference>
<dbReference type="Reactome" id="R-MMU-8856825">
    <property type="pathway name" value="Cargo recognition for clathrin-mediated endocytosis"/>
</dbReference>
<dbReference type="Reactome" id="R-MMU-8856828">
    <property type="pathway name" value="Clathrin-mediated endocytosis"/>
</dbReference>
<dbReference type="Reactome" id="R-MMU-9696264">
    <property type="pathway name" value="RND3 GTPase cycle"/>
</dbReference>
<dbReference type="BioGRID-ORCS" id="233489">
    <property type="hits" value="9 hits in 82 CRISPR screens"/>
</dbReference>
<dbReference type="CD-CODE" id="CE726F99">
    <property type="entry name" value="Postsynaptic density"/>
</dbReference>
<dbReference type="ChiTaRS" id="Picalm">
    <property type="organism name" value="mouse"/>
</dbReference>
<dbReference type="PRO" id="PR:Q7M6Y3"/>
<dbReference type="Proteomes" id="UP000000589">
    <property type="component" value="Chromosome 7"/>
</dbReference>
<dbReference type="RNAct" id="Q7M6Y3">
    <property type="molecule type" value="protein"/>
</dbReference>
<dbReference type="Bgee" id="ENSMUSG00000039361">
    <property type="expression patterns" value="Expressed in humerus cartilage element and 246 other cell types or tissues"/>
</dbReference>
<dbReference type="ExpressionAtlas" id="Q7M6Y3">
    <property type="expression patterns" value="baseline and differential"/>
</dbReference>
<dbReference type="GO" id="GO:0009986">
    <property type="term" value="C:cell surface"/>
    <property type="evidence" value="ECO:0007669"/>
    <property type="project" value="Ensembl"/>
</dbReference>
<dbReference type="GO" id="GO:0030132">
    <property type="term" value="C:clathrin coat of coated pit"/>
    <property type="evidence" value="ECO:0007669"/>
    <property type="project" value="Ensembl"/>
</dbReference>
<dbReference type="GO" id="GO:0005905">
    <property type="term" value="C:clathrin-coated pit"/>
    <property type="evidence" value="ECO:0000314"/>
    <property type="project" value="UniProtKB"/>
</dbReference>
<dbReference type="GO" id="GO:0030136">
    <property type="term" value="C:clathrin-coated vesicle"/>
    <property type="evidence" value="ECO:0007669"/>
    <property type="project" value="UniProtKB-SubCell"/>
</dbReference>
<dbReference type="GO" id="GO:0005769">
    <property type="term" value="C:early endosome"/>
    <property type="evidence" value="ECO:0007669"/>
    <property type="project" value="Ensembl"/>
</dbReference>
<dbReference type="GO" id="GO:0070381">
    <property type="term" value="C:endosome to plasma membrane transport vesicle"/>
    <property type="evidence" value="ECO:0007669"/>
    <property type="project" value="Ensembl"/>
</dbReference>
<dbReference type="GO" id="GO:0005794">
    <property type="term" value="C:Golgi apparatus"/>
    <property type="evidence" value="ECO:0007669"/>
    <property type="project" value="UniProtKB-SubCell"/>
</dbReference>
<dbReference type="GO" id="GO:0097418">
    <property type="term" value="C:neurofibrillary tangle"/>
    <property type="evidence" value="ECO:0000250"/>
    <property type="project" value="Alzheimers_University_of_Toronto"/>
</dbReference>
<dbReference type="GO" id="GO:0043025">
    <property type="term" value="C:neuronal cell body"/>
    <property type="evidence" value="ECO:0000250"/>
    <property type="project" value="Alzheimers_University_of_Toronto"/>
</dbReference>
<dbReference type="GO" id="GO:0005634">
    <property type="term" value="C:nucleus"/>
    <property type="evidence" value="ECO:0007669"/>
    <property type="project" value="UniProtKB-SubCell"/>
</dbReference>
<dbReference type="GO" id="GO:0031982">
    <property type="term" value="C:vesicle"/>
    <property type="evidence" value="ECO:0000314"/>
    <property type="project" value="Alzheimers_University_of_Toronto"/>
</dbReference>
<dbReference type="GO" id="GO:0005545">
    <property type="term" value="F:1-phosphatidylinositol binding"/>
    <property type="evidence" value="ECO:0000250"/>
    <property type="project" value="UniProtKB"/>
</dbReference>
<dbReference type="GO" id="GO:0030276">
    <property type="term" value="F:clathrin binding"/>
    <property type="evidence" value="ECO:0000250"/>
    <property type="project" value="UniProtKB"/>
</dbReference>
<dbReference type="GO" id="GO:0032050">
    <property type="term" value="F:clathrin heavy chain binding"/>
    <property type="evidence" value="ECO:0007669"/>
    <property type="project" value="Ensembl"/>
</dbReference>
<dbReference type="GO" id="GO:0050750">
    <property type="term" value="F:low-density lipoprotein particle receptor binding"/>
    <property type="evidence" value="ECO:0007669"/>
    <property type="project" value="Ensembl"/>
</dbReference>
<dbReference type="GO" id="GO:0031267">
    <property type="term" value="F:small GTPase binding"/>
    <property type="evidence" value="ECO:0007669"/>
    <property type="project" value="Ensembl"/>
</dbReference>
<dbReference type="GO" id="GO:0000149">
    <property type="term" value="F:SNARE binding"/>
    <property type="evidence" value="ECO:0007669"/>
    <property type="project" value="Ensembl"/>
</dbReference>
<dbReference type="GO" id="GO:0048156">
    <property type="term" value="F:tau protein binding"/>
    <property type="evidence" value="ECO:0007669"/>
    <property type="project" value="Ensembl"/>
</dbReference>
<dbReference type="GO" id="GO:0150093">
    <property type="term" value="P:amyloid-beta clearance by transcytosis"/>
    <property type="evidence" value="ECO:0000315"/>
    <property type="project" value="ARUK-UCL"/>
</dbReference>
<dbReference type="GO" id="GO:0007409">
    <property type="term" value="P:axonogenesis"/>
    <property type="evidence" value="ECO:0000315"/>
    <property type="project" value="BHF-UCL"/>
</dbReference>
<dbReference type="GO" id="GO:0048268">
    <property type="term" value="P:clathrin coat assembly"/>
    <property type="evidence" value="ECO:0007669"/>
    <property type="project" value="Ensembl"/>
</dbReference>
<dbReference type="GO" id="GO:0072583">
    <property type="term" value="P:clathrin-dependent endocytosis"/>
    <property type="evidence" value="ECO:0000315"/>
    <property type="project" value="Alzheimers_University_of_Toronto"/>
</dbReference>
<dbReference type="GO" id="GO:0048813">
    <property type="term" value="P:dendrite morphogenesis"/>
    <property type="evidence" value="ECO:0000315"/>
    <property type="project" value="BHF-UCL"/>
</dbReference>
<dbReference type="GO" id="GO:0016197">
    <property type="term" value="P:endosomal transport"/>
    <property type="evidence" value="ECO:0007669"/>
    <property type="project" value="Ensembl"/>
</dbReference>
<dbReference type="GO" id="GO:0030097">
    <property type="term" value="P:hemopoiesis"/>
    <property type="evidence" value="ECO:0000315"/>
    <property type="project" value="UniProtKB"/>
</dbReference>
<dbReference type="GO" id="GO:0006879">
    <property type="term" value="P:intracellular iron ion homeostasis"/>
    <property type="evidence" value="ECO:0007669"/>
    <property type="project" value="Ensembl"/>
</dbReference>
<dbReference type="GO" id="GO:0007611">
    <property type="term" value="P:learning or memory"/>
    <property type="evidence" value="ECO:0000316"/>
    <property type="project" value="ARUK-UCL"/>
</dbReference>
<dbReference type="GO" id="GO:0097753">
    <property type="term" value="P:membrane bending"/>
    <property type="evidence" value="ECO:0007669"/>
    <property type="project" value="Ensembl"/>
</dbReference>
<dbReference type="GO" id="GO:0060586">
    <property type="term" value="P:multicellular organismal-level iron ion homeostasis"/>
    <property type="evidence" value="ECO:0000250"/>
    <property type="project" value="Alzheimers_University_of_Toronto"/>
</dbReference>
<dbReference type="GO" id="GO:0010629">
    <property type="term" value="P:negative regulation of gene expression"/>
    <property type="evidence" value="ECO:0000250"/>
    <property type="project" value="Alzheimers_University_of_Toronto"/>
</dbReference>
<dbReference type="GO" id="GO:2000009">
    <property type="term" value="P:negative regulation of protein localization to cell surface"/>
    <property type="evidence" value="ECO:0007669"/>
    <property type="project" value="Ensembl"/>
</dbReference>
<dbReference type="GO" id="GO:1903077">
    <property type="term" value="P:negative regulation of protein localization to plasma membrane"/>
    <property type="evidence" value="ECO:0007669"/>
    <property type="project" value="Ensembl"/>
</dbReference>
<dbReference type="GO" id="GO:0048261">
    <property type="term" value="P:negative regulation of receptor-mediated endocytosis"/>
    <property type="evidence" value="ECO:0007669"/>
    <property type="project" value="Ensembl"/>
</dbReference>
<dbReference type="GO" id="GO:1902993">
    <property type="term" value="P:positive regulation of amyloid precursor protein catabolic process"/>
    <property type="evidence" value="ECO:0000315"/>
    <property type="project" value="Alzheimers_University_of_Toronto"/>
</dbReference>
<dbReference type="GO" id="GO:1902004">
    <property type="term" value="P:positive regulation of amyloid-beta formation"/>
    <property type="evidence" value="ECO:0000315"/>
    <property type="project" value="Alzheimers_University_of_Toronto"/>
</dbReference>
<dbReference type="GO" id="GO:0045893">
    <property type="term" value="P:positive regulation of DNA-templated transcription"/>
    <property type="evidence" value="ECO:0007669"/>
    <property type="project" value="Ensembl"/>
</dbReference>
<dbReference type="GO" id="GO:0046579">
    <property type="term" value="P:positive regulation of Ras protein signal transduction"/>
    <property type="evidence" value="ECO:0007669"/>
    <property type="project" value="Ensembl"/>
</dbReference>
<dbReference type="GO" id="GO:0031623">
    <property type="term" value="P:receptor internalization"/>
    <property type="evidence" value="ECO:0007669"/>
    <property type="project" value="Ensembl"/>
</dbReference>
<dbReference type="GO" id="GO:0006898">
    <property type="term" value="P:receptor-mediated endocytosis"/>
    <property type="evidence" value="ECO:0000314"/>
    <property type="project" value="UniProtKB"/>
</dbReference>
<dbReference type="GO" id="GO:1902991">
    <property type="term" value="P:regulation of amyloid precursor protein catabolic process"/>
    <property type="evidence" value="ECO:0000250"/>
    <property type="project" value="Alzheimers_University_of_Toronto"/>
</dbReference>
<dbReference type="GO" id="GO:0097494">
    <property type="term" value="P:regulation of vesicle size"/>
    <property type="evidence" value="ECO:0007669"/>
    <property type="project" value="Ensembl"/>
</dbReference>
<dbReference type="GO" id="GO:0016188">
    <property type="term" value="P:synaptic vesicle maturation"/>
    <property type="evidence" value="ECO:0000315"/>
    <property type="project" value="Alzheimers_University_of_Toronto"/>
</dbReference>
<dbReference type="GO" id="GO:0006900">
    <property type="term" value="P:vesicle budding from membrane"/>
    <property type="evidence" value="ECO:0007669"/>
    <property type="project" value="Ensembl"/>
</dbReference>
<dbReference type="GO" id="GO:0035459">
    <property type="term" value="P:vesicle cargo loading"/>
    <property type="evidence" value="ECO:0000315"/>
    <property type="project" value="Alzheimers_University_of_Toronto"/>
</dbReference>
<dbReference type="CDD" id="cd16985">
    <property type="entry name" value="ANTH_N_AP180"/>
    <property type="match status" value="1"/>
</dbReference>
<dbReference type="FunFam" id="1.20.58.150:FF:000001">
    <property type="entry name" value="phosphatidylinositol-binding clathrin assembly protein-like isoform X1"/>
    <property type="match status" value="1"/>
</dbReference>
<dbReference type="FunFam" id="1.25.40.90:FF:000001">
    <property type="entry name" value="phosphatidylinositol-binding clathrin assembly protein-like isoform X1"/>
    <property type="match status" value="1"/>
</dbReference>
<dbReference type="Gene3D" id="1.25.40.90">
    <property type="match status" value="1"/>
</dbReference>
<dbReference type="Gene3D" id="1.20.58.150">
    <property type="entry name" value="ANTH domain"/>
    <property type="match status" value="1"/>
</dbReference>
<dbReference type="InterPro" id="IPR011417">
    <property type="entry name" value="ANTH_dom"/>
</dbReference>
<dbReference type="InterPro" id="IPR014712">
    <property type="entry name" value="ANTH_dom_sf"/>
</dbReference>
<dbReference type="InterPro" id="IPR045192">
    <property type="entry name" value="AP180-like"/>
</dbReference>
<dbReference type="InterPro" id="IPR013809">
    <property type="entry name" value="ENTH"/>
</dbReference>
<dbReference type="InterPro" id="IPR008942">
    <property type="entry name" value="ENTH_VHS"/>
</dbReference>
<dbReference type="PANTHER" id="PTHR22951">
    <property type="entry name" value="CLATHRIN ASSEMBLY PROTEIN"/>
    <property type="match status" value="1"/>
</dbReference>
<dbReference type="PANTHER" id="PTHR22951:SF16">
    <property type="entry name" value="PHOSPHATIDYLINOSITOL-BINDING CLATHRIN ASSEMBLY PROTEIN"/>
    <property type="match status" value="1"/>
</dbReference>
<dbReference type="Pfam" id="PF07651">
    <property type="entry name" value="ANTH"/>
    <property type="match status" value="1"/>
</dbReference>
<dbReference type="SMART" id="SM00273">
    <property type="entry name" value="ENTH"/>
    <property type="match status" value="1"/>
</dbReference>
<dbReference type="SUPFAM" id="SSF48464">
    <property type="entry name" value="ENTH/VHS domain"/>
    <property type="match status" value="1"/>
</dbReference>
<dbReference type="SUPFAM" id="SSF89009">
    <property type="entry name" value="GAT-like domain"/>
    <property type="match status" value="1"/>
</dbReference>
<dbReference type="PROSITE" id="PS50942">
    <property type="entry name" value="ENTH"/>
    <property type="match status" value="1"/>
</dbReference>
<reference evidence="9" key="1">
    <citation type="journal article" date="2003" name="Proc. Natl. Acad. Sci. U.S.A.">
        <title>Mutations in the clathrin-assembly gene Picalm are responsible for the hematopoietic and iron metabolism abnormalities in fit1 mice.</title>
        <authorList>
            <person name="Klebig M.L."/>
            <person name="Wall M.D."/>
            <person name="Potter M.D."/>
            <person name="Rowe E.L."/>
            <person name="Carpenter D.A."/>
            <person name="Rinchik E.M."/>
        </authorList>
    </citation>
    <scope>NUCLEOTIDE SEQUENCE [MRNA] (ISOFORM 1)</scope>
    <scope>FUNCTION</scope>
    <scope>TISSUE SPECIFICITY</scope>
    <scope>DISRUPTION PHENOTYPE</scope>
    <source>
        <strain evidence="11">BALB/cRl</strain>
        <tissue evidence="11">Liver</tissue>
    </source>
</reference>
<reference evidence="9" key="2">
    <citation type="journal article" date="2004" name="Genome Res.">
        <title>The status, quality, and expansion of the NIH full-length cDNA project: the Mammalian Gene Collection (MGC).</title>
        <authorList>
            <consortium name="The MGC Project Team"/>
        </authorList>
    </citation>
    <scope>NUCLEOTIDE SEQUENCE [LARGE SCALE MRNA] (ISOFORMS 2; 3; 4; 5 AND 6)</scope>
    <source>
        <strain>Czech II</strain>
        <strain evidence="10">FVB/N</strain>
        <tissue>Mammary tumor</tissue>
        <tissue>Retina</tissue>
    </source>
</reference>
<reference key="3">
    <citation type="journal article" date="2005" name="Science">
        <title>The transcriptional landscape of the mammalian genome.</title>
        <authorList>
            <person name="Carninci P."/>
            <person name="Kasukawa T."/>
            <person name="Katayama S."/>
            <person name="Gough J."/>
            <person name="Frith M.C."/>
            <person name="Maeda N."/>
            <person name="Oyama R."/>
            <person name="Ravasi T."/>
            <person name="Lenhard B."/>
            <person name="Wells C."/>
            <person name="Kodzius R."/>
            <person name="Shimokawa K."/>
            <person name="Bajic V.B."/>
            <person name="Brenner S.E."/>
            <person name="Batalov S."/>
            <person name="Forrest A.R."/>
            <person name="Zavolan M."/>
            <person name="Davis M.J."/>
            <person name="Wilming L.G."/>
            <person name="Aidinis V."/>
            <person name="Allen J.E."/>
            <person name="Ambesi-Impiombato A."/>
            <person name="Apweiler R."/>
            <person name="Aturaliya R.N."/>
            <person name="Bailey T.L."/>
            <person name="Bansal M."/>
            <person name="Baxter L."/>
            <person name="Beisel K.W."/>
            <person name="Bersano T."/>
            <person name="Bono H."/>
            <person name="Chalk A.M."/>
            <person name="Chiu K.P."/>
            <person name="Choudhary V."/>
            <person name="Christoffels A."/>
            <person name="Clutterbuck D.R."/>
            <person name="Crowe M.L."/>
            <person name="Dalla E."/>
            <person name="Dalrymple B.P."/>
            <person name="de Bono B."/>
            <person name="Della Gatta G."/>
            <person name="di Bernardo D."/>
            <person name="Down T."/>
            <person name="Engstrom P."/>
            <person name="Fagiolini M."/>
            <person name="Faulkner G."/>
            <person name="Fletcher C.F."/>
            <person name="Fukushima T."/>
            <person name="Furuno M."/>
            <person name="Futaki S."/>
            <person name="Gariboldi M."/>
            <person name="Georgii-Hemming P."/>
            <person name="Gingeras T.R."/>
            <person name="Gojobori T."/>
            <person name="Green R.E."/>
            <person name="Gustincich S."/>
            <person name="Harbers M."/>
            <person name="Hayashi Y."/>
            <person name="Hensch T.K."/>
            <person name="Hirokawa N."/>
            <person name="Hill D."/>
            <person name="Huminiecki L."/>
            <person name="Iacono M."/>
            <person name="Ikeo K."/>
            <person name="Iwama A."/>
            <person name="Ishikawa T."/>
            <person name="Jakt M."/>
            <person name="Kanapin A."/>
            <person name="Katoh M."/>
            <person name="Kawasawa Y."/>
            <person name="Kelso J."/>
            <person name="Kitamura H."/>
            <person name="Kitano H."/>
            <person name="Kollias G."/>
            <person name="Krishnan S.P."/>
            <person name="Kruger A."/>
            <person name="Kummerfeld S.K."/>
            <person name="Kurochkin I.V."/>
            <person name="Lareau L.F."/>
            <person name="Lazarevic D."/>
            <person name="Lipovich L."/>
            <person name="Liu J."/>
            <person name="Liuni S."/>
            <person name="McWilliam S."/>
            <person name="Madan Babu M."/>
            <person name="Madera M."/>
            <person name="Marchionni L."/>
            <person name="Matsuda H."/>
            <person name="Matsuzawa S."/>
            <person name="Miki H."/>
            <person name="Mignone F."/>
            <person name="Miyake S."/>
            <person name="Morris K."/>
            <person name="Mottagui-Tabar S."/>
            <person name="Mulder N."/>
            <person name="Nakano N."/>
            <person name="Nakauchi H."/>
            <person name="Ng P."/>
            <person name="Nilsson R."/>
            <person name="Nishiguchi S."/>
            <person name="Nishikawa S."/>
            <person name="Nori F."/>
            <person name="Ohara O."/>
            <person name="Okazaki Y."/>
            <person name="Orlando V."/>
            <person name="Pang K.C."/>
            <person name="Pavan W.J."/>
            <person name="Pavesi G."/>
            <person name="Pesole G."/>
            <person name="Petrovsky N."/>
            <person name="Piazza S."/>
            <person name="Reed J."/>
            <person name="Reid J.F."/>
            <person name="Ring B.Z."/>
            <person name="Ringwald M."/>
            <person name="Rost B."/>
            <person name="Ruan Y."/>
            <person name="Salzberg S.L."/>
            <person name="Sandelin A."/>
            <person name="Schneider C."/>
            <person name="Schoenbach C."/>
            <person name="Sekiguchi K."/>
            <person name="Semple C.A."/>
            <person name="Seno S."/>
            <person name="Sessa L."/>
            <person name="Sheng Y."/>
            <person name="Shibata Y."/>
            <person name="Shimada H."/>
            <person name="Shimada K."/>
            <person name="Silva D."/>
            <person name="Sinclair B."/>
            <person name="Sperling S."/>
            <person name="Stupka E."/>
            <person name="Sugiura K."/>
            <person name="Sultana R."/>
            <person name="Takenaka Y."/>
            <person name="Taki K."/>
            <person name="Tammoja K."/>
            <person name="Tan S.L."/>
            <person name="Tang S."/>
            <person name="Taylor M.S."/>
            <person name="Tegner J."/>
            <person name="Teichmann S.A."/>
            <person name="Ueda H.R."/>
            <person name="van Nimwegen E."/>
            <person name="Verardo R."/>
            <person name="Wei C.L."/>
            <person name="Yagi K."/>
            <person name="Yamanishi H."/>
            <person name="Zabarovsky E."/>
            <person name="Zhu S."/>
            <person name="Zimmer A."/>
            <person name="Hide W."/>
            <person name="Bult C."/>
            <person name="Grimmond S.M."/>
            <person name="Teasdale R.D."/>
            <person name="Liu E.T."/>
            <person name="Brusic V."/>
            <person name="Quackenbush J."/>
            <person name="Wahlestedt C."/>
            <person name="Mattick J.S."/>
            <person name="Hume D.A."/>
            <person name="Kai C."/>
            <person name="Sasaki D."/>
            <person name="Tomaru Y."/>
            <person name="Fukuda S."/>
            <person name="Kanamori-Katayama M."/>
            <person name="Suzuki M."/>
            <person name="Aoki J."/>
            <person name="Arakawa T."/>
            <person name="Iida J."/>
            <person name="Imamura K."/>
            <person name="Itoh M."/>
            <person name="Kato T."/>
            <person name="Kawaji H."/>
            <person name="Kawagashira N."/>
            <person name="Kawashima T."/>
            <person name="Kojima M."/>
            <person name="Kondo S."/>
            <person name="Konno H."/>
            <person name="Nakano K."/>
            <person name="Ninomiya N."/>
            <person name="Nishio T."/>
            <person name="Okada M."/>
            <person name="Plessy C."/>
            <person name="Shibata K."/>
            <person name="Shiraki T."/>
            <person name="Suzuki S."/>
            <person name="Tagami M."/>
            <person name="Waki K."/>
            <person name="Watahiki A."/>
            <person name="Okamura-Oho Y."/>
            <person name="Suzuki H."/>
            <person name="Kawai J."/>
            <person name="Hayashizaki Y."/>
        </authorList>
    </citation>
    <scope>NUCLEOTIDE SEQUENCE [LARGE SCALE MRNA] (ISOFORM 5)</scope>
    <scope>NUCLEOTIDE SEQUENCE [LARGE SCALE MRNA] OF 143-660 (ISOFORM 2)</scope>
    <source>
        <strain>C57BL/6J</strain>
        <tissue>Epididymis</tissue>
        <tissue>Kidney</tissue>
    </source>
</reference>
<reference evidence="9" key="4">
    <citation type="journal article" date="1997" name="Blood">
        <title>Mutations in the murine fitness 1 gene result in defective hematopoiesis.</title>
        <authorList>
            <person name="Potter M.D."/>
            <person name="Shinpock S.G."/>
            <person name="Popp R.A."/>
            <person name="Godfrey V."/>
            <person name="Carpenter D.A."/>
            <person name="Bernstein A."/>
            <person name="Johnson D.K."/>
            <person name="Rinchik E.M."/>
        </authorList>
    </citation>
    <scope>FUNCTION</scope>
</reference>
<reference key="5">
    <citation type="journal article" date="2007" name="Proc. Natl. Acad. Sci. U.S.A.">
        <title>Large-scale phosphorylation analysis of mouse liver.</title>
        <authorList>
            <person name="Villen J."/>
            <person name="Beausoleil S.A."/>
            <person name="Gerber S.A."/>
            <person name="Gygi S.P."/>
        </authorList>
    </citation>
    <scope>IDENTIFICATION BY MASS SPECTROMETRY [LARGE SCALE ANALYSIS]</scope>
    <source>
        <tissue>Liver</tissue>
    </source>
</reference>
<reference key="6">
    <citation type="journal article" date="2010" name="Cell">
        <title>A tissue-specific atlas of mouse protein phosphorylation and expression.</title>
        <authorList>
            <person name="Huttlin E.L."/>
            <person name="Jedrychowski M.P."/>
            <person name="Elias J.E."/>
            <person name="Goswami T."/>
            <person name="Rad R."/>
            <person name="Beausoleil S.A."/>
            <person name="Villen J."/>
            <person name="Haas W."/>
            <person name="Sowa M.E."/>
            <person name="Gygi S.P."/>
        </authorList>
    </citation>
    <scope>IDENTIFICATION BY MASS SPECTROMETRY [LARGE SCALE ANALYSIS]</scope>
    <source>
        <tissue>Brain</tissue>
        <tissue>Brown adipose tissue</tissue>
        <tissue>Heart</tissue>
        <tissue>Kidney</tissue>
        <tissue>Liver</tissue>
        <tissue>Lung</tissue>
        <tissue>Pancreas</tissue>
        <tissue>Spleen</tissue>
        <tissue>Testis</tissue>
    </source>
</reference>
<reference key="7">
    <citation type="journal article" date="2012" name="PLoS ONE">
        <title>The clathrin assembly protein PICALM is required for erythroid maturation and transferrin internalization in mice.</title>
        <authorList>
            <person name="Suzuki M."/>
            <person name="Tanaka H."/>
            <person name="Tanimura A."/>
            <person name="Tanabe K."/>
            <person name="Oe N."/>
            <person name="Rai S."/>
            <person name="Kon S."/>
            <person name="Fukumoto M."/>
            <person name="Takei K."/>
            <person name="Abe T."/>
            <person name="Matsumura I."/>
            <person name="Kanakura Y."/>
            <person name="Watanabe T."/>
        </authorList>
    </citation>
    <scope>FUNCTION</scope>
    <scope>DISRUPTION PHENOTYPE</scope>
</reference>
<comment type="function">
    <text evidence="2 5 6">Cytoplasmic adapter protein that plays a critical role in clathrin-mediated endocytosis which is important in processes such as internalization of cell receptors, synaptic transmission or removal of apoptotic cells. Recruits AP-2 and attaches clathrin triskelions to the cytoplasmic side of plasma membrane leading to clathrin-coated vesicles (CCVs) assembly. Furthermore, regulates clathrin-coated vesicle size and maturation by directly sensing and driving membrane curvature. In addition to binding to clathrin, mediates the endocytosis of small R-SNARES (Soluble NSF Attachment Protein REceptors) between plasma membranes and endosomes including VAMP2, VAMP3, VAMP4, VAMP7 or VAMP8. In turn, PICALM-dependent SNARE endocytosis is required for the formation and maturation of autophagic precursors. Modulates thereby autophagy and the turnover of autophagy substrates such as MAPT/TAU or amyloid precursor protein cleaved C-terminal fragment (APP-CTF).</text>
</comment>
<comment type="subunit">
    <text evidence="2">Binds to clathrin; involves primarily the C-terminal sequences, but the full-length protein is required for full binding capacity. Binds phosphatidylinositol 4,5- bisphosphate. Interacts with PIMREG; this interaction may change the subcellular location into the nucleus. Interacts with AP2A1 (via its alpha-appendage domain). Interacts (via N-terminus) with VAMP2; VAMP3; VAMP7 and VAMP8 (Via N-terminus). Interacts with LC3/MAP1LC3A.</text>
</comment>
<comment type="subcellular location">
    <subcellularLocation>
        <location evidence="2">Cell membrane</location>
    </subcellularLocation>
    <subcellularLocation>
        <location evidence="2">Membrane</location>
        <location evidence="2">Clathrin-coated pit</location>
    </subcellularLocation>
    <subcellularLocation>
        <location evidence="2">Golgi apparatus</location>
    </subcellularLocation>
    <subcellularLocation>
        <location evidence="2">Cytoplasmic vesicle</location>
        <location evidence="2">Clathrin-coated vesicle</location>
    </subcellularLocation>
    <subcellularLocation>
        <location evidence="2">Nucleus</location>
    </subcellularLocation>
    <text evidence="2">Colocalized with clathrin in the Golgi area. Interaction with PIMREG may target PICALM to the nucleus in some cells.</text>
</comment>
<comment type="alternative products">
    <event type="alternative splicing"/>
    <isoform>
        <id>Q7M6Y3-1</id>
        <name evidence="9">1</name>
        <sequence type="displayed"/>
    </isoform>
    <isoform>
        <id>Q7M6Y3-2</id>
        <name evidence="9">2</name>
        <sequence type="described" ref="VSP_050684 VSP_050685 VSP_050686"/>
    </isoform>
    <isoform>
        <id>Q7M6Y3-3</id>
        <name evidence="9">3</name>
        <sequence type="described" ref="VSP_050684 VSP_050685"/>
    </isoform>
    <isoform>
        <id>Q7M6Y3-4</id>
        <name evidence="9">4</name>
        <sequence type="described" ref="VSP_050684"/>
    </isoform>
    <isoform>
        <id>Q7M6Y3-5</id>
        <name evidence="9">5</name>
        <sequence type="described" ref="VSP_050685"/>
    </isoform>
    <isoform>
        <id>Q7M6Y3-6</id>
        <name evidence="9">6</name>
        <sequence type="described" ref="VSP_050686"/>
    </isoform>
</comment>
<comment type="tissue specificity">
    <text evidence="5">Skins and livers of 1-week-old mice.</text>
</comment>
<comment type="disruption phenotype">
    <text evidence="5 6">PICALM-deficient mice suffer from severe anemia due to ineffective erythropoiesis in the bone marrow. In addition, they exhibit impaired clathrin-mediated internalization of transferrin leading to iron metabolism abnormalities.</text>
</comment>
<comment type="similarity">
    <text evidence="9">Belongs to the PICALM/SNAP91 family.</text>
</comment>
<comment type="sequence caution" evidence="9">
    <conflict type="erroneous initiation">
        <sequence resource="EMBL-CDS" id="BAC39454"/>
    </conflict>
    <text>Truncated N-terminus.</text>
</comment>
<gene>
    <name type="primary">Picalm</name>
    <name type="synonym">Calm</name>
    <name type="synonym">Fit1</name>
</gene>
<feature type="initiator methionine" description="Removed" evidence="2">
    <location>
        <position position="1"/>
    </location>
</feature>
<feature type="chain" id="PRO_0000187063" description="Phosphatidylinositol-binding clathrin assembly protein">
    <location>
        <begin position="2"/>
        <end position="660"/>
    </location>
</feature>
<feature type="domain" description="ENTH" evidence="3 9">
    <location>
        <begin position="14"/>
        <end position="145"/>
    </location>
</feature>
<feature type="region of interest" description="Interaction with PIMREG" evidence="1">
    <location>
        <begin position="221"/>
        <end position="294"/>
    </location>
</feature>
<feature type="region of interest" description="Disordered" evidence="4">
    <location>
        <begin position="556"/>
        <end position="580"/>
    </location>
</feature>
<feature type="compositionally biased region" description="Polar residues" evidence="4">
    <location>
        <begin position="556"/>
        <end position="566"/>
    </location>
</feature>
<feature type="modified residue" description="N-acetylserine" evidence="2">
    <location>
        <position position="2"/>
    </location>
</feature>
<feature type="modified residue" description="Phosphoserine" evidence="2">
    <location>
        <position position="16"/>
    </location>
</feature>
<feature type="modified residue" description="Phosphoserine" evidence="2">
    <location>
        <position position="20"/>
    </location>
</feature>
<feature type="modified residue" description="Phosphoserine" evidence="2">
    <location>
        <position position="303"/>
    </location>
</feature>
<feature type="modified residue" description="Phosphoserine" evidence="2">
    <location>
        <position position="315"/>
    </location>
</feature>
<feature type="cross-link" description="Glycyl lysine isopeptide (Lys-Gly) (interchain with G-Cter in SUMO2)" evidence="2">
    <location>
        <position position="238"/>
    </location>
</feature>
<feature type="splice variant" id="VSP_050684" description="In isoform 2, isoform 3 and isoform 4." evidence="7 8">
    <location>
        <begin position="420"/>
        <end position="469"/>
    </location>
</feature>
<feature type="splice variant" id="VSP_050685" description="In isoform 2, isoform 3 and isoform 5." evidence="7 8">
    <location>
        <begin position="506"/>
        <end position="510"/>
    </location>
</feature>
<feature type="splice variant" id="VSP_050686" description="In isoform 2 and isoform 6." evidence="7 8">
    <location>
        <begin position="594"/>
        <end position="601"/>
    </location>
</feature>
<feature type="sequence conflict" description="In Ref. 2; AAH21491/AAH23843/AAH25566/AAH57683." evidence="9" ref="2">
    <original>N</original>
    <variation>S</variation>
    <location>
        <position position="522"/>
    </location>
</feature>